<feature type="chain" id="PRO_0000423717" description="UDP-D-apiose/UDP-D-xylose synthase 1">
    <location>
        <begin position="1"/>
        <end position="389"/>
    </location>
</feature>
<feature type="active site" description="Proton acceptor" evidence="2">
    <location>
        <position position="185"/>
    </location>
</feature>
<feature type="binding site" evidence="2 10 11">
    <location>
        <position position="28"/>
    </location>
    <ligand>
        <name>NAD(+)</name>
        <dbReference type="ChEBI" id="CHEBI:57540"/>
    </ligand>
</feature>
<feature type="binding site" evidence="2 10 11">
    <location>
        <position position="29"/>
    </location>
    <ligand>
        <name>NAD(+)</name>
        <dbReference type="ChEBI" id="CHEBI:57540"/>
    </ligand>
</feature>
<feature type="binding site" evidence="2 10">
    <location>
        <position position="49"/>
    </location>
    <ligand>
        <name>NAD(+)</name>
        <dbReference type="ChEBI" id="CHEBI:57540"/>
    </ligand>
</feature>
<feature type="binding site" evidence="2 10 11">
    <location>
        <position position="76"/>
    </location>
    <ligand>
        <name>NAD(+)</name>
        <dbReference type="ChEBI" id="CHEBI:57540"/>
    </ligand>
</feature>
<feature type="binding site" evidence="2 10 11">
    <location>
        <position position="77"/>
    </location>
    <ligand>
        <name>NAD(+)</name>
        <dbReference type="ChEBI" id="CHEBI:57540"/>
    </ligand>
</feature>
<feature type="binding site" evidence="2 10">
    <location>
        <position position="96"/>
    </location>
    <ligand>
        <name>NAD(+)</name>
        <dbReference type="ChEBI" id="CHEBI:57540"/>
    </ligand>
</feature>
<feature type="binding site" evidence="2 11">
    <location>
        <position position="105"/>
    </location>
    <ligand>
        <name>UDP-alpha-D-glucuronate</name>
        <dbReference type="ChEBI" id="CHEBI:58052"/>
    </ligand>
</feature>
<feature type="binding site" evidence="2 11">
    <location>
        <position position="139"/>
    </location>
    <ligand>
        <name>UDP-alpha-D-glucuronate</name>
        <dbReference type="ChEBI" id="CHEBI:58052"/>
    </ligand>
</feature>
<feature type="binding site" evidence="2 11">
    <location>
        <position position="141"/>
    </location>
    <ligand>
        <name>UDP-alpha-D-glucuronate</name>
        <dbReference type="ChEBI" id="CHEBI:58052"/>
    </ligand>
</feature>
<feature type="binding site" evidence="2 10 11">
    <location>
        <position position="182"/>
    </location>
    <ligand>
        <name>UDP-alpha-D-glucuronate</name>
        <dbReference type="ChEBI" id="CHEBI:58052"/>
    </ligand>
</feature>
<feature type="binding site" evidence="2 10 11">
    <location>
        <position position="185"/>
    </location>
    <ligand>
        <name>NAD(+)</name>
        <dbReference type="ChEBI" id="CHEBI:57540"/>
    </ligand>
</feature>
<feature type="binding site" evidence="2 11">
    <location>
        <position position="185"/>
    </location>
    <ligand>
        <name>UDP-alpha-D-glucuronate</name>
        <dbReference type="ChEBI" id="CHEBI:58052"/>
    </ligand>
</feature>
<feature type="binding site" evidence="2 10 11">
    <location>
        <position position="189"/>
    </location>
    <ligand>
        <name>NAD(+)</name>
        <dbReference type="ChEBI" id="CHEBI:57540"/>
    </ligand>
</feature>
<feature type="binding site" evidence="2 10 11">
    <location>
        <position position="214"/>
    </location>
    <ligand>
        <name>UDP-alpha-D-glucuronate</name>
        <dbReference type="ChEBI" id="CHEBI:58052"/>
    </ligand>
</feature>
<feature type="binding site" evidence="2 10">
    <location>
        <position position="215"/>
    </location>
    <ligand>
        <name>NAD(+)</name>
        <dbReference type="ChEBI" id="CHEBI:57540"/>
    </ligand>
</feature>
<feature type="binding site" evidence="2 10 11">
    <location>
        <position position="235"/>
    </location>
    <ligand>
        <name>NAD(+)</name>
        <dbReference type="ChEBI" id="CHEBI:57540"/>
    </ligand>
</feature>
<feature type="binding site" evidence="2 10 11">
    <location>
        <position position="251"/>
    </location>
    <ligand>
        <name>UDP-alpha-D-glucuronate</name>
        <dbReference type="ChEBI" id="CHEBI:58052"/>
    </ligand>
</feature>
<feature type="binding site" evidence="2 10 11">
    <location>
        <position position="253"/>
    </location>
    <ligand>
        <name>UDP-alpha-D-glucuronate</name>
        <dbReference type="ChEBI" id="CHEBI:58052"/>
    </ligand>
</feature>
<feature type="binding site" evidence="2 10 11">
    <location>
        <position position="260"/>
    </location>
    <ligand>
        <name>UDP-alpha-D-glucuronate</name>
        <dbReference type="ChEBI" id="CHEBI:58052"/>
    </ligand>
</feature>
<feature type="binding site" evidence="2 11">
    <location>
        <position position="331"/>
    </location>
    <ligand>
        <name>UDP-alpha-D-glucuronate</name>
        <dbReference type="ChEBI" id="CHEBI:58052"/>
    </ligand>
</feature>
<feature type="binding site" evidence="2 10 11">
    <location>
        <position position="335"/>
    </location>
    <ligand>
        <name>UDP-alpha-D-glucuronate</name>
        <dbReference type="ChEBI" id="CHEBI:58052"/>
    </ligand>
</feature>
<feature type="binding site" evidence="2 10 11">
    <location>
        <position position="337"/>
    </location>
    <ligand>
        <name>UDP-alpha-D-glucuronate</name>
        <dbReference type="ChEBI" id="CHEBI:58052"/>
    </ligand>
</feature>
<feature type="binding site" evidence="2 10 11">
    <location>
        <position position="341"/>
    </location>
    <ligand>
        <name>UDP-alpha-D-glucuronate</name>
        <dbReference type="ChEBI" id="CHEBI:58052"/>
    </ligand>
</feature>
<feature type="mutagenesis site" description="Reduced activity, produces mainly UDP-D-xylose over UDP-D-apiose. Reduced activity, produces mainly UDP-D-xylose over UDP-D-apiose; when associated with S-140." evidence="2">
    <original>C</original>
    <variation>A</variation>
    <location>
        <position position="100"/>
    </location>
</feature>
<feature type="mutagenesis site" description="Reduced activity and impaired ability to produce UDP-apiose." evidence="2">
    <original>C</original>
    <variation>S</variation>
    <location>
        <position position="100"/>
    </location>
</feature>
<feature type="mutagenesis site" description="Reduced activity and impaired ability to produce UDP-apiose." evidence="2">
    <original>Y</original>
    <variation>A</variation>
    <location>
        <position position="105"/>
    </location>
</feature>
<feature type="mutagenesis site" description="Reduced activity, produces mainly UDP-D-xylose over UDP-D-apiose." evidence="2">
    <original>Y</original>
    <variation>F</variation>
    <location>
        <position position="105"/>
    </location>
</feature>
<feature type="mutagenesis site" description="Strongly reduced activity and accumulation of the UDP-4-keto-xylose intermediate." evidence="2">
    <original>T</original>
    <variation>V</variation>
    <location>
        <position position="139"/>
    </location>
</feature>
<feature type="mutagenesis site" description="Reduced activity, produces mainly UDP-D-xylose over UDP-D-apiose." evidence="2">
    <original>C</original>
    <variation>A</variation>
    <location>
        <position position="140"/>
    </location>
</feature>
<feature type="mutagenesis site" description="Reduced activity. Reduced activity, produces mainly UDP-D-xylose over UDP-D-apiose; when associated with A-100." evidence="2">
    <original>C</original>
    <variation>S</variation>
    <location>
        <position position="140"/>
    </location>
</feature>
<feature type="mutagenesis site" description="Strongly reduced activity and accumulation of the UDP-4-keto-xylose intermediate." evidence="2">
    <original>E</original>
    <variation>A</variation>
    <location>
        <position position="141"/>
    </location>
</feature>
<feature type="mutagenesis site" description="Lost activity." evidence="2">
    <original>Y</original>
    <variation>F</variation>
    <location>
        <position position="185"/>
    </location>
</feature>
<feature type="strand" evidence="12">
    <location>
        <begin position="10"/>
        <end position="12"/>
    </location>
</feature>
<feature type="strand" evidence="12">
    <location>
        <begin position="19"/>
        <end position="23"/>
    </location>
</feature>
<feature type="turn" evidence="12">
    <location>
        <begin position="24"/>
        <end position="26"/>
    </location>
</feature>
<feature type="helix" evidence="12">
    <location>
        <begin position="28"/>
        <end position="40"/>
    </location>
</feature>
<feature type="strand" evidence="12">
    <location>
        <begin position="44"/>
        <end position="50"/>
    </location>
</feature>
<feature type="helix" evidence="12">
    <location>
        <begin position="53"/>
        <end position="58"/>
    </location>
</feature>
<feature type="turn" evidence="12">
    <location>
        <begin position="60"/>
        <end position="62"/>
    </location>
</feature>
<feature type="strand" evidence="12">
    <location>
        <begin position="64"/>
        <end position="66"/>
    </location>
</feature>
<feature type="strand" evidence="12">
    <location>
        <begin position="69"/>
        <end position="74"/>
    </location>
</feature>
<feature type="helix" evidence="12">
    <location>
        <begin position="82"/>
        <end position="89"/>
    </location>
</feature>
<feature type="strand" evidence="12">
    <location>
        <begin position="91"/>
        <end position="95"/>
    </location>
</feature>
<feature type="helix" evidence="12">
    <location>
        <begin position="102"/>
        <end position="104"/>
    </location>
</feature>
<feature type="turn" evidence="12">
    <location>
        <begin position="105"/>
        <end position="107"/>
    </location>
</feature>
<feature type="helix" evidence="12">
    <location>
        <begin position="109"/>
        <end position="116"/>
    </location>
</feature>
<feature type="helix" evidence="12">
    <location>
        <begin position="118"/>
        <end position="120"/>
    </location>
</feature>
<feature type="helix" evidence="12">
    <location>
        <begin position="121"/>
        <end position="129"/>
    </location>
</feature>
<feature type="strand" evidence="12">
    <location>
        <begin position="133"/>
        <end position="137"/>
    </location>
</feature>
<feature type="helix" evidence="12">
    <location>
        <begin position="140"/>
        <end position="142"/>
    </location>
</feature>
<feature type="helix" evidence="12">
    <location>
        <begin position="147"/>
        <end position="150"/>
    </location>
</feature>
<feature type="helix" evidence="12">
    <location>
        <begin position="156"/>
        <end position="159"/>
    </location>
</feature>
<feature type="helix" evidence="12">
    <location>
        <begin position="161"/>
        <end position="163"/>
    </location>
</feature>
<feature type="turn" evidence="12">
    <location>
        <begin position="168"/>
        <end position="170"/>
    </location>
</feature>
<feature type="strand" evidence="12">
    <location>
        <begin position="173"/>
        <end position="175"/>
    </location>
</feature>
<feature type="helix" evidence="12">
    <location>
        <begin position="183"/>
        <end position="202"/>
    </location>
</feature>
<feature type="strand" evidence="12">
    <location>
        <begin position="207"/>
        <end position="212"/>
    </location>
</feature>
<feature type="turn" evidence="12">
    <location>
        <begin position="224"/>
        <end position="226"/>
    </location>
</feature>
<feature type="helix" evidence="12">
    <location>
        <begin position="236"/>
        <end position="245"/>
    </location>
</feature>
<feature type="strand" evidence="12">
    <location>
        <begin position="250"/>
        <end position="253"/>
    </location>
</feature>
<feature type="helix" evidence="12">
    <location>
        <begin position="254"/>
        <end position="256"/>
    </location>
</feature>
<feature type="strand" evidence="12">
    <location>
        <begin position="259"/>
        <end position="261"/>
    </location>
</feature>
<feature type="helix" evidence="12">
    <location>
        <begin position="265"/>
        <end position="277"/>
    </location>
</feature>
<feature type="helix" evidence="12">
    <location>
        <begin position="279"/>
        <end position="282"/>
    </location>
</feature>
<feature type="strand" evidence="12">
    <location>
        <begin position="286"/>
        <end position="289"/>
    </location>
</feature>
<feature type="strand" evidence="12">
    <location>
        <begin position="294"/>
        <end position="297"/>
    </location>
</feature>
<feature type="helix" evidence="12">
    <location>
        <begin position="298"/>
        <end position="313"/>
    </location>
</feature>
<feature type="strand" evidence="12">
    <location>
        <begin position="322"/>
        <end position="325"/>
    </location>
</feature>
<feature type="helix" evidence="12">
    <location>
        <begin position="327"/>
        <end position="331"/>
    </location>
</feature>
<feature type="helix" evidence="12">
    <location>
        <begin position="346"/>
        <end position="352"/>
    </location>
</feature>
<feature type="helix" evidence="12">
    <location>
        <begin position="360"/>
        <end position="381"/>
    </location>
</feature>
<keyword id="KW-0002">3D-structure</keyword>
<keyword id="KW-0961">Cell wall biogenesis/degradation</keyword>
<keyword id="KW-0963">Cytoplasm</keyword>
<keyword id="KW-0456">Lyase</keyword>
<keyword id="KW-0520">NAD</keyword>
<keyword id="KW-1185">Reference proteome</keyword>
<reference key="1">
    <citation type="journal article" date="2003" name="Plant J.">
        <title>The biosynthesis of the branched-chain sugar d-apiose in plants: functional cloning and characterization of a UDP-d-apiose/UDP-d-xylose synthase from Arabidopsis.</title>
        <authorList>
            <person name="Molhoj M."/>
            <person name="Verma R."/>
            <person name="Reiter W.D."/>
        </authorList>
    </citation>
    <scope>NUCLEOTIDE SEQUENCE [MRNA]</scope>
    <scope>FUNCTION</scope>
    <scope>COFACTOR</scope>
    <scope>ACTIVITY REGULATION</scope>
    <scope>BIOPHYSICOCHEMICAL PROPERTIES</scope>
    <scope>SUBUNIT</scope>
    <scope>TISSUE SPECIFICITY</scope>
</reference>
<reference key="2">
    <citation type="journal article" date="1999" name="Nature">
        <title>Sequence and analysis of chromosome 2 of the plant Arabidopsis thaliana.</title>
        <authorList>
            <person name="Lin X."/>
            <person name="Kaul S."/>
            <person name="Rounsley S.D."/>
            <person name="Shea T.P."/>
            <person name="Benito M.-I."/>
            <person name="Town C.D."/>
            <person name="Fujii C.Y."/>
            <person name="Mason T.M."/>
            <person name="Bowman C.L."/>
            <person name="Barnstead M.E."/>
            <person name="Feldblyum T.V."/>
            <person name="Buell C.R."/>
            <person name="Ketchum K.A."/>
            <person name="Lee J.J."/>
            <person name="Ronning C.M."/>
            <person name="Koo H.L."/>
            <person name="Moffat K.S."/>
            <person name="Cronin L.A."/>
            <person name="Shen M."/>
            <person name="Pai G."/>
            <person name="Van Aken S."/>
            <person name="Umayam L."/>
            <person name="Tallon L.J."/>
            <person name="Gill J.E."/>
            <person name="Adams M.D."/>
            <person name="Carrera A.J."/>
            <person name="Creasy T.H."/>
            <person name="Goodman H.M."/>
            <person name="Somerville C.R."/>
            <person name="Copenhaver G.P."/>
            <person name="Preuss D."/>
            <person name="Nierman W.C."/>
            <person name="White O."/>
            <person name="Eisen J.A."/>
            <person name="Salzberg S.L."/>
            <person name="Fraser C.M."/>
            <person name="Venter J.C."/>
        </authorList>
    </citation>
    <scope>NUCLEOTIDE SEQUENCE [LARGE SCALE GENOMIC DNA]</scope>
    <source>
        <strain>cv. Columbia</strain>
    </source>
</reference>
<reference key="3">
    <citation type="journal article" date="2017" name="Plant J.">
        <title>Araport11: a complete reannotation of the Arabidopsis thaliana reference genome.</title>
        <authorList>
            <person name="Cheng C.Y."/>
            <person name="Krishnakumar V."/>
            <person name="Chan A.P."/>
            <person name="Thibaud-Nissen F."/>
            <person name="Schobel S."/>
            <person name="Town C.D."/>
        </authorList>
    </citation>
    <scope>GENOME REANNOTATION</scope>
    <source>
        <strain>cv. Columbia</strain>
    </source>
</reference>
<reference key="4">
    <citation type="journal article" date="2003" name="Science">
        <title>Empirical analysis of transcriptional activity in the Arabidopsis genome.</title>
        <authorList>
            <person name="Yamada K."/>
            <person name="Lim J."/>
            <person name="Dale J.M."/>
            <person name="Chen H."/>
            <person name="Shinn P."/>
            <person name="Palm C.J."/>
            <person name="Southwick A.M."/>
            <person name="Wu H.C."/>
            <person name="Kim C.J."/>
            <person name="Nguyen M."/>
            <person name="Pham P.K."/>
            <person name="Cheuk R.F."/>
            <person name="Karlin-Newmann G."/>
            <person name="Liu S.X."/>
            <person name="Lam B."/>
            <person name="Sakano H."/>
            <person name="Wu T."/>
            <person name="Yu G."/>
            <person name="Miranda M."/>
            <person name="Quach H.L."/>
            <person name="Tripp M."/>
            <person name="Chang C.H."/>
            <person name="Lee J.M."/>
            <person name="Toriumi M.J."/>
            <person name="Chan M.M."/>
            <person name="Tang C.C."/>
            <person name="Onodera C.S."/>
            <person name="Deng J.M."/>
            <person name="Akiyama K."/>
            <person name="Ansari Y."/>
            <person name="Arakawa T."/>
            <person name="Banh J."/>
            <person name="Banno F."/>
            <person name="Bowser L."/>
            <person name="Brooks S.Y."/>
            <person name="Carninci P."/>
            <person name="Chao Q."/>
            <person name="Choy N."/>
            <person name="Enju A."/>
            <person name="Goldsmith A.D."/>
            <person name="Gurjal M."/>
            <person name="Hansen N.F."/>
            <person name="Hayashizaki Y."/>
            <person name="Johnson-Hopson C."/>
            <person name="Hsuan V.W."/>
            <person name="Iida K."/>
            <person name="Karnes M."/>
            <person name="Khan S."/>
            <person name="Koesema E."/>
            <person name="Ishida J."/>
            <person name="Jiang P.X."/>
            <person name="Jones T."/>
            <person name="Kawai J."/>
            <person name="Kamiya A."/>
            <person name="Meyers C."/>
            <person name="Nakajima M."/>
            <person name="Narusaka M."/>
            <person name="Seki M."/>
            <person name="Sakurai T."/>
            <person name="Satou M."/>
            <person name="Tamse R."/>
            <person name="Vaysberg M."/>
            <person name="Wallender E.K."/>
            <person name="Wong C."/>
            <person name="Yamamura Y."/>
            <person name="Yuan S."/>
            <person name="Shinozaki K."/>
            <person name="Davis R.W."/>
            <person name="Theologis A."/>
            <person name="Ecker J.R."/>
        </authorList>
    </citation>
    <scope>NUCLEOTIDE SEQUENCE [LARGE SCALE MRNA]</scope>
    <source>
        <strain>cv. Columbia</strain>
    </source>
</reference>
<reference key="5">
    <citation type="submission" date="2004-08" db="EMBL/GenBank/DDBJ databases">
        <title>Reconstruction of cDNA sequences for hypothetical genes in Arabidopsis thaliana from 5' and 3' RACE products.</title>
        <authorList>
            <person name="Xiao Y.-L."/>
            <person name="Underwood B.A."/>
            <person name="Moskal W.A. Jr."/>
            <person name="Wang W."/>
            <person name="Redman J.C."/>
            <person name="Wu H.C."/>
            <person name="Utterback T."/>
            <person name="Town C.D."/>
        </authorList>
    </citation>
    <scope>NUCLEOTIDE SEQUENCE [LARGE SCALE MRNA]</scope>
    <source>
        <strain>cv. Columbia</strain>
    </source>
</reference>
<reference key="6">
    <citation type="submission" date="2005-02" db="EMBL/GenBank/DDBJ databases">
        <authorList>
            <person name="Underwood B.A."/>
            <person name="Xiao Y.-L."/>
            <person name="Moskal W.A. Jr."/>
            <person name="Monaghan E.L."/>
            <person name="Wang W."/>
            <person name="Redman J.C."/>
            <person name="Wu H.C."/>
            <person name="Utterback T."/>
            <person name="Town C.D."/>
        </authorList>
    </citation>
    <scope>NUCLEOTIDE SEQUENCE [LARGE SCALE MRNA]</scope>
    <source>
        <strain>cv. Columbia</strain>
    </source>
</reference>
<reference key="7">
    <citation type="submission" date="2002-03" db="EMBL/GenBank/DDBJ databases">
        <title>Full-length cDNA from Arabidopsis thaliana.</title>
        <authorList>
            <person name="Brover V.V."/>
            <person name="Troukhan M.E."/>
            <person name="Alexandrov N.A."/>
            <person name="Lu Y.-P."/>
            <person name="Flavell R.B."/>
            <person name="Feldmann K.A."/>
        </authorList>
    </citation>
    <scope>NUCLEOTIDE SEQUENCE [LARGE SCALE MRNA]</scope>
</reference>
<reference key="8">
    <citation type="journal article" date="2020" name="Plant J.">
        <title>UDP-Api/UDP-Xyl synthases affect plant development by controlling the content of UDP-Api to regulate the RG-II-borate complex.</title>
        <authorList>
            <person name="Zhao X."/>
            <person name="Ebert B."/>
            <person name="Zhang B."/>
            <person name="Liu H."/>
            <person name="Zhang Y."/>
            <person name="Zeng W."/>
            <person name="Rautengarten C."/>
            <person name="Li H."/>
            <person name="Chen X."/>
            <person name="Bacic A."/>
            <person name="Wang G."/>
            <person name="Men S."/>
            <person name="Zhou Y."/>
            <person name="Heazlewood J.L."/>
            <person name="Wu A.M."/>
        </authorList>
    </citation>
    <scope>FUNCTION</scope>
    <scope>DISRUPTION PHENOTYPE</scope>
    <scope>TISSUE SPECIFICITY</scope>
    <scope>SUBCELLULAR LOCATION</scope>
    <scope>SUBUNIT</scope>
    <scope>INTERACTION WITH AXS2</scope>
    <source>
        <strain>cv. Columbia</strain>
    </source>
</reference>
<reference key="9">
    <citation type="journal article" date="2019" name="Nat. Catal.">
        <title>Deciphering the enzymatic mechanism of sugar ring contraction in UDP-apiose biosynthesis.</title>
        <authorList>
            <person name="Savino S."/>
            <person name="Borg A.J.E."/>
            <person name="Dennig A."/>
            <person name="Pfeiffer M."/>
            <person name="de Giorgi F."/>
            <person name="Weber H."/>
            <person name="Dubey K.D."/>
            <person name="Rovira C."/>
            <person name="Mattevi A."/>
            <person name="Nidetzky B."/>
        </authorList>
    </citation>
    <scope>X-RAY CRYSTALLOGRAPHY (3.02 ANGSTROMS) OF 1-389 IN COMPLEX WITH NAD(+) AND UDP-ALPHA-D-GLUCURONATE</scope>
    <scope>COFACTOR</scope>
    <scope>FUNCTION</scope>
    <scope>MUTAGENESIS OF CYS-100; TYR-105; THR-139; CYS-140; GLU-141 AND TYR-185</scope>
    <scope>ACTIVE SITE</scope>
    <scope>BIOPHYSICOCHEMICAL PROPERTIES</scope>
</reference>
<gene>
    <name evidence="4 6" type="primary">AXS1</name>
    <name evidence="5" type="synonym">UAXS</name>
    <name evidence="8" type="ordered locus">At2g27860</name>
    <name evidence="9" type="ORF">F15K20.4</name>
</gene>
<protein>
    <recommendedName>
        <fullName evidence="4 5 6">UDP-D-apiose/UDP-D-xylose synthase 1</fullName>
        <ecNumber evidence="1">4.1.1.35</ecNumber>
    </recommendedName>
</protein>
<dbReference type="EC" id="4.1.1.35" evidence="1"/>
<dbReference type="EMBL" id="AY442191">
    <property type="protein sequence ID" value="AAR14687.1"/>
    <property type="molecule type" value="mRNA"/>
</dbReference>
<dbReference type="EMBL" id="AC005824">
    <property type="protein sequence ID" value="AAC73015.1"/>
    <property type="molecule type" value="Genomic_DNA"/>
</dbReference>
<dbReference type="EMBL" id="CP002685">
    <property type="protein sequence ID" value="AEC08054.1"/>
    <property type="molecule type" value="Genomic_DNA"/>
</dbReference>
<dbReference type="EMBL" id="AF361574">
    <property type="protein sequence ID" value="AAK32742.1"/>
    <property type="molecule type" value="mRNA"/>
</dbReference>
<dbReference type="EMBL" id="BT001016">
    <property type="protein sequence ID" value="AAN46770.1"/>
    <property type="molecule type" value="mRNA"/>
</dbReference>
<dbReference type="EMBL" id="AY735589">
    <property type="protein sequence ID" value="AAU44459.1"/>
    <property type="molecule type" value="mRNA"/>
</dbReference>
<dbReference type="EMBL" id="AY924751">
    <property type="protein sequence ID" value="AAX23826.1"/>
    <property type="molecule type" value="mRNA"/>
</dbReference>
<dbReference type="EMBL" id="AY086830">
    <property type="protein sequence ID" value="AAM63878.1"/>
    <property type="molecule type" value="mRNA"/>
</dbReference>
<dbReference type="PIR" id="G84677">
    <property type="entry name" value="G84677"/>
</dbReference>
<dbReference type="RefSeq" id="NP_180353.1">
    <property type="nucleotide sequence ID" value="NM_128345.4"/>
</dbReference>
<dbReference type="PDB" id="6H0N">
    <property type="method" value="X-ray"/>
    <property type="resolution" value="3.02 A"/>
    <property type="chains" value="A/B=1-389"/>
</dbReference>
<dbReference type="PDB" id="6H0P">
    <property type="method" value="X-ray"/>
    <property type="resolution" value="3.47 A"/>
    <property type="chains" value="A/B=1-389"/>
</dbReference>
<dbReference type="PDBsum" id="6H0N"/>
<dbReference type="PDBsum" id="6H0P"/>
<dbReference type="SMR" id="Q9ZUY6"/>
<dbReference type="BioGRID" id="2682">
    <property type="interactions" value="14"/>
</dbReference>
<dbReference type="FunCoup" id="Q9ZUY6">
    <property type="interactions" value="810"/>
</dbReference>
<dbReference type="STRING" id="3702.Q9ZUY6"/>
<dbReference type="iPTMnet" id="Q9ZUY6"/>
<dbReference type="PaxDb" id="3702-AT2G27860.1"/>
<dbReference type="ProteomicsDB" id="241163"/>
<dbReference type="EnsemblPlants" id="AT2G27860.1">
    <property type="protein sequence ID" value="AT2G27860.1"/>
    <property type="gene ID" value="AT2G27860"/>
</dbReference>
<dbReference type="GeneID" id="817332"/>
<dbReference type="Gramene" id="AT2G27860.1">
    <property type="protein sequence ID" value="AT2G27860.1"/>
    <property type="gene ID" value="AT2G27860"/>
</dbReference>
<dbReference type="KEGG" id="ath:AT2G27860"/>
<dbReference type="Araport" id="AT2G27860"/>
<dbReference type="TAIR" id="AT2G27860">
    <property type="gene designation" value="AXS1"/>
</dbReference>
<dbReference type="eggNOG" id="KOG1429">
    <property type="taxonomic scope" value="Eukaryota"/>
</dbReference>
<dbReference type="HOGENOM" id="CLU_007383_7_0_1"/>
<dbReference type="InParanoid" id="Q9ZUY6"/>
<dbReference type="OMA" id="EPENAHP"/>
<dbReference type="PhylomeDB" id="Q9ZUY6"/>
<dbReference type="BioCyc" id="ARA:AT2G27860-MONOMER"/>
<dbReference type="BioCyc" id="MetaCyc:AT2G27860-MONOMER"/>
<dbReference type="PRO" id="PR:Q9ZUY6"/>
<dbReference type="Proteomes" id="UP000006548">
    <property type="component" value="Chromosome 2"/>
</dbReference>
<dbReference type="ExpressionAtlas" id="Q9ZUY6">
    <property type="expression patterns" value="baseline and differential"/>
</dbReference>
<dbReference type="GO" id="GO:0005737">
    <property type="term" value="C:cytoplasm"/>
    <property type="evidence" value="ECO:0000314"/>
    <property type="project" value="UniProtKB"/>
</dbReference>
<dbReference type="GO" id="GO:0005829">
    <property type="term" value="C:cytosol"/>
    <property type="evidence" value="ECO:0007005"/>
    <property type="project" value="TAIR"/>
</dbReference>
<dbReference type="GO" id="GO:0005777">
    <property type="term" value="C:peroxisome"/>
    <property type="evidence" value="ECO:0007005"/>
    <property type="project" value="TAIR"/>
</dbReference>
<dbReference type="GO" id="GO:0042802">
    <property type="term" value="F:identical protein binding"/>
    <property type="evidence" value="ECO:0000314"/>
    <property type="project" value="UniProtKB"/>
</dbReference>
<dbReference type="GO" id="GO:0051287">
    <property type="term" value="F:NAD binding"/>
    <property type="evidence" value="ECO:0000314"/>
    <property type="project" value="TAIR"/>
</dbReference>
<dbReference type="GO" id="GO:0046982">
    <property type="term" value="F:protein heterodimerization activity"/>
    <property type="evidence" value="ECO:0000353"/>
    <property type="project" value="UniProtKB"/>
</dbReference>
<dbReference type="GO" id="GO:0042803">
    <property type="term" value="F:protein homodimerization activity"/>
    <property type="evidence" value="ECO:0000314"/>
    <property type="project" value="UniProtKB"/>
</dbReference>
<dbReference type="GO" id="GO:0102765">
    <property type="term" value="F:UDP-D-apiose synthase activity"/>
    <property type="evidence" value="ECO:0000314"/>
    <property type="project" value="UniProtKB"/>
</dbReference>
<dbReference type="GO" id="GO:0048040">
    <property type="term" value="F:UDP-glucuronate decarboxylase activity"/>
    <property type="evidence" value="ECO:0000314"/>
    <property type="project" value="TAIR"/>
</dbReference>
<dbReference type="GO" id="GO:0071555">
    <property type="term" value="P:cell wall organization"/>
    <property type="evidence" value="ECO:0007669"/>
    <property type="project" value="UniProtKB-KW"/>
</dbReference>
<dbReference type="GO" id="GO:0009226">
    <property type="term" value="P:nucleotide-sugar biosynthetic process"/>
    <property type="evidence" value="ECO:0000314"/>
    <property type="project" value="TAIR"/>
</dbReference>
<dbReference type="GO" id="GO:0010396">
    <property type="term" value="P:rhamnogalacturonan II metabolic process"/>
    <property type="evidence" value="ECO:0000316"/>
    <property type="project" value="UniProtKB"/>
</dbReference>
<dbReference type="GO" id="GO:0033352">
    <property type="term" value="P:UDP-D-apiose biosynthetic process"/>
    <property type="evidence" value="ECO:0000314"/>
    <property type="project" value="UniProtKB"/>
</dbReference>
<dbReference type="GO" id="GO:0033320">
    <property type="term" value="P:UDP-D-xylose biosynthetic process"/>
    <property type="evidence" value="ECO:0000314"/>
    <property type="project" value="UniProtKB"/>
</dbReference>
<dbReference type="CDD" id="cd05257">
    <property type="entry name" value="Arna_like_SDR_e"/>
    <property type="match status" value="1"/>
</dbReference>
<dbReference type="FunFam" id="3.40.50.720:FF:000201">
    <property type="entry name" value="UDP-D-apiose/UDP-D-xylose synthase 2"/>
    <property type="match status" value="1"/>
</dbReference>
<dbReference type="Gene3D" id="3.40.50.720">
    <property type="entry name" value="NAD(P)-binding Rossmann-like Domain"/>
    <property type="match status" value="1"/>
</dbReference>
<dbReference type="InterPro" id="IPR045869">
    <property type="entry name" value="Arna-like_SDR_e"/>
</dbReference>
<dbReference type="InterPro" id="IPR001509">
    <property type="entry name" value="Epimerase_deHydtase"/>
</dbReference>
<dbReference type="InterPro" id="IPR050177">
    <property type="entry name" value="Lipid_A_modif_metabolic_enz"/>
</dbReference>
<dbReference type="InterPro" id="IPR036291">
    <property type="entry name" value="NAD(P)-bd_dom_sf"/>
</dbReference>
<dbReference type="PANTHER" id="PTHR43245">
    <property type="entry name" value="BIFUNCTIONAL POLYMYXIN RESISTANCE PROTEIN ARNA"/>
    <property type="match status" value="1"/>
</dbReference>
<dbReference type="PANTHER" id="PTHR43245:SF45">
    <property type="entry name" value="UDP-D-APIOSE_UDP-D-XYLOSE SYNTHASE 1"/>
    <property type="match status" value="1"/>
</dbReference>
<dbReference type="Pfam" id="PF01370">
    <property type="entry name" value="Epimerase"/>
    <property type="match status" value="1"/>
</dbReference>
<dbReference type="SUPFAM" id="SSF51735">
    <property type="entry name" value="NAD(P)-binding Rossmann-fold domains"/>
    <property type="match status" value="1"/>
</dbReference>
<organism>
    <name type="scientific">Arabidopsis thaliana</name>
    <name type="common">Mouse-ear cress</name>
    <dbReference type="NCBI Taxonomy" id="3702"/>
    <lineage>
        <taxon>Eukaryota</taxon>
        <taxon>Viridiplantae</taxon>
        <taxon>Streptophyta</taxon>
        <taxon>Embryophyta</taxon>
        <taxon>Tracheophyta</taxon>
        <taxon>Spermatophyta</taxon>
        <taxon>Magnoliopsida</taxon>
        <taxon>eudicotyledons</taxon>
        <taxon>Gunneridae</taxon>
        <taxon>Pentapetalae</taxon>
        <taxon>rosids</taxon>
        <taxon>malvids</taxon>
        <taxon>Brassicales</taxon>
        <taxon>Brassicaceae</taxon>
        <taxon>Camelineae</taxon>
        <taxon>Arabidopsis</taxon>
    </lineage>
</organism>
<comment type="function">
    <text evidence="1 2 3">Together with AXS2, catalyzes the conversion of UDP-D-glucuronate into a mixture of UDP-D-apiose (UDP-Api) as the main product and UDP-D-xylose to a lesser extent, via a cycle of oxidation and reduction (PubMed:12969423, PubMed:31844840, PubMed:32662159). D-Apiose (3-C-hydroxymethyl-d-erythrose) is the only plant cell wall monosaccharide with a branched carbon skeleton and is found in rhamnogalacturonan II (RG-II), apiogalacturonan, and several apioglycosides (PubMed:12969423, PubMed:32662159).</text>
</comment>
<comment type="catalytic activity">
    <reaction evidence="1">
        <text>UDP-alpha-D-glucuronate + H(+) = UDP-alpha-D-xylose + CO2</text>
        <dbReference type="Rhea" id="RHEA:23916"/>
        <dbReference type="ChEBI" id="CHEBI:15378"/>
        <dbReference type="ChEBI" id="CHEBI:16526"/>
        <dbReference type="ChEBI" id="CHEBI:57632"/>
        <dbReference type="ChEBI" id="CHEBI:58052"/>
        <dbReference type="EC" id="4.1.1.35"/>
    </reaction>
    <physiologicalReaction direction="left-to-right" evidence="1">
        <dbReference type="Rhea" id="RHEA:23917"/>
    </physiologicalReaction>
</comment>
<comment type="catalytic activity">
    <reaction evidence="1">
        <text>UDP-alpha-D-glucuronate + H(+) = UDP-alpha-D-apiose + CO2</text>
        <dbReference type="Rhea" id="RHEA:70523"/>
        <dbReference type="ChEBI" id="CHEBI:15378"/>
        <dbReference type="ChEBI" id="CHEBI:16526"/>
        <dbReference type="ChEBI" id="CHEBI:58052"/>
        <dbReference type="ChEBI" id="CHEBI:73883"/>
    </reaction>
    <physiologicalReaction direction="left-to-right" evidence="1">
        <dbReference type="Rhea" id="RHEA:70524"/>
    </physiologicalReaction>
</comment>
<comment type="cofactor">
    <cofactor evidence="1 2">
        <name>NAD(+)</name>
        <dbReference type="ChEBI" id="CHEBI:57540"/>
    </cofactor>
</comment>
<comment type="activity regulation">
    <text evidence="1">Inhibited by UDP-D-galacturonate.</text>
</comment>
<comment type="biophysicochemical properties">
    <kinetics>
        <KM evidence="1">7 uM for UDP-D-glucuronate</KM>
        <text evidence="1 2">kcat is 0.3 min(-1) with UDP-D-galacturonate as substrate (PubMed:12969423). kcat is 0.49 min(-1) with UDP-D-galacturonate as substrate (PubMed:31844840).</text>
    </kinetics>
    <phDependence>
        <text evidence="1">Optimum pH is 8.0.</text>
    </phDependence>
</comment>
<comment type="subunit">
    <text evidence="1 3">Homodimer and heterodimer with AXS2.</text>
</comment>
<comment type="subcellular location">
    <subcellularLocation>
        <location evidence="3">Cytoplasm</location>
    </subcellularLocation>
</comment>
<comment type="tissue specificity">
    <text evidence="1 3">Widely expressed with stronger expression in leaves and stems, and lower levels in flowers, siliques, pistils, pollen and roots.</text>
</comment>
<comment type="disruption phenotype">
    <text evidence="3">No visible morphological differences (PubMed:32662159). Plants lacking both AXS1 and AXS2 are not viable (PubMed:32662159). Heterozygous axs1/+ axs2 and axs1 axs2/+ mutants have intermediate phenotypes, including impaired seed production, sterile pollen and lost of shoot and root apical dominance; these phenotypes are associated with strongly reduced UDP-alpha-D-apiose (UDP-Api) levels (PubMed:32662159). Cell walls are thicker and contain reduced number of rhamnogalacturonan II-borate (RG-II-borate) complex in heterozygous double mutants (PubMed:32662159).</text>
</comment>
<comment type="similarity">
    <text evidence="7">Belongs to the NAD(P)-dependent epimerase/dehydratase family.</text>
</comment>
<evidence type="ECO:0000269" key="1">
    <source>
    </source>
</evidence>
<evidence type="ECO:0000269" key="2">
    <source>
    </source>
</evidence>
<evidence type="ECO:0000269" key="3">
    <source>
    </source>
</evidence>
<evidence type="ECO:0000303" key="4">
    <source>
    </source>
</evidence>
<evidence type="ECO:0000303" key="5">
    <source>
    </source>
</evidence>
<evidence type="ECO:0000303" key="6">
    <source>
    </source>
</evidence>
<evidence type="ECO:0000305" key="7"/>
<evidence type="ECO:0000312" key="8">
    <source>
        <dbReference type="Araport" id="AT2G27860"/>
    </source>
</evidence>
<evidence type="ECO:0000312" key="9">
    <source>
        <dbReference type="EMBL" id="AAC73015.1"/>
    </source>
</evidence>
<evidence type="ECO:0007744" key="10">
    <source>
        <dbReference type="PDB" id="6H0N"/>
    </source>
</evidence>
<evidence type="ECO:0007744" key="11">
    <source>
        <dbReference type="PDB" id="6H0P"/>
    </source>
</evidence>
<evidence type="ECO:0007829" key="12">
    <source>
        <dbReference type="PDB" id="6H0N"/>
    </source>
</evidence>
<name>AXS1_ARATH</name>
<accession>Q9ZUY6</accession>
<proteinExistence type="evidence at protein level"/>
<sequence length="389" mass="43638">MANGANRVDLDGKPIQPLTICMIGAGGFIGSHLCEKLLTETPHKVLALDVYNDKIKHLLEPDTVEWSGRIQFHRINIKHDSRLEGLVKMADLIINLAAICTPADYNTRPLDTIYSNFIDALPVVKYCSENNKRLIHFSTCEVYGKTIGSFLPKDHPLRDDPAFYVLKEDISPCIFGSIEKQRWSYACAKQLIERLVYAEGAENGLEFTIVRPFNWIGPRMDFIPGIDGPSEGVPRVLACFSNNLLRREPLKLVDGGESQRTFVYINDAIEAVLLMIENPERANGHIFNVGNPNNEVTVRQLAEMMTEVYAKVSGEGAIESPTVDVSSKEFYGEGYDDSDKRIPDMTIINRQLGWNPKTSLWDLLESTLTYQHRTYAEAVKKATSKPVAS</sequence>